<dbReference type="EMBL" id="AB065441">
    <property type="protein sequence ID" value="BAC05708.1"/>
    <property type="molecule type" value="Genomic_DNA"/>
</dbReference>
<dbReference type="EMBL" id="BK004366">
    <property type="protein sequence ID" value="DAA04764.1"/>
    <property type="status" value="ALT_INIT"/>
    <property type="molecule type" value="Genomic_DNA"/>
</dbReference>
<dbReference type="CCDS" id="CCDS31097.1"/>
<dbReference type="RefSeq" id="NP_001001966.1">
    <property type="nucleotide sequence ID" value="NM_001001966.2"/>
</dbReference>
<dbReference type="SMR" id="Q8NHC5"/>
<dbReference type="FunCoup" id="Q8NHC5">
    <property type="interactions" value="416"/>
</dbReference>
<dbReference type="STRING" id="9606.ENSP00000493024"/>
<dbReference type="GlyCosmos" id="Q8NHC5">
    <property type="glycosylation" value="2 sites, No reported glycans"/>
</dbReference>
<dbReference type="GlyGen" id="Q8NHC5">
    <property type="glycosylation" value="2 sites"/>
</dbReference>
<dbReference type="iPTMnet" id="Q8NHC5"/>
<dbReference type="PhosphoSitePlus" id="Q8NHC5"/>
<dbReference type="BioMuta" id="OR14A16"/>
<dbReference type="DMDM" id="38372837"/>
<dbReference type="MassIVE" id="Q8NHC5"/>
<dbReference type="PaxDb" id="9606-ENSP00000350248"/>
<dbReference type="ProteomicsDB" id="73699"/>
<dbReference type="Antibodypedia" id="77890">
    <property type="antibodies" value="10 antibodies from 8 providers"/>
</dbReference>
<dbReference type="DNASU" id="284532"/>
<dbReference type="Ensembl" id="ENST00000641093.1">
    <property type="protein sequence ID" value="ENSP00000493024.1"/>
    <property type="gene ID" value="ENSG00000196772.5"/>
</dbReference>
<dbReference type="GeneID" id="284532"/>
<dbReference type="KEGG" id="hsa:284532"/>
<dbReference type="MANE-Select" id="ENST00000641093.1">
    <property type="protein sequence ID" value="ENSP00000493024.1"/>
    <property type="RefSeq nucleotide sequence ID" value="NM_001001966.2"/>
    <property type="RefSeq protein sequence ID" value="NP_001001966.1"/>
</dbReference>
<dbReference type="UCSC" id="uc001idm.1">
    <property type="organism name" value="human"/>
</dbReference>
<dbReference type="AGR" id="HGNC:15022"/>
<dbReference type="CTD" id="284532"/>
<dbReference type="DisGeNET" id="284532"/>
<dbReference type="GeneCards" id="OR14A16"/>
<dbReference type="HGNC" id="HGNC:15022">
    <property type="gene designation" value="OR14A16"/>
</dbReference>
<dbReference type="HPA" id="ENSG00000196772">
    <property type="expression patterns" value="Not detected"/>
</dbReference>
<dbReference type="MalaCards" id="OR14A16"/>
<dbReference type="neXtProt" id="NX_Q8NHC5"/>
<dbReference type="OpenTargets" id="ENSG00000196772"/>
<dbReference type="PharmGKB" id="PA162398441"/>
<dbReference type="VEuPathDB" id="HostDB:ENSG00000196772"/>
<dbReference type="eggNOG" id="ENOG502SKEB">
    <property type="taxonomic scope" value="Eukaryota"/>
</dbReference>
<dbReference type="GeneTree" id="ENSGT01050000244828"/>
<dbReference type="HOGENOM" id="CLU_012526_1_0_1"/>
<dbReference type="InParanoid" id="Q8NHC5"/>
<dbReference type="OMA" id="DICCFIY"/>
<dbReference type="OrthoDB" id="9836137at2759"/>
<dbReference type="PAN-GO" id="Q8NHC5">
    <property type="GO annotations" value="2 GO annotations based on evolutionary models"/>
</dbReference>
<dbReference type="PhylomeDB" id="Q8NHC5"/>
<dbReference type="TreeFam" id="TF352740"/>
<dbReference type="PathwayCommons" id="Q8NHC5"/>
<dbReference type="Reactome" id="R-HSA-9752946">
    <property type="pathway name" value="Expression and translocation of olfactory receptors"/>
</dbReference>
<dbReference type="BioGRID-ORCS" id="284532">
    <property type="hits" value="8 hits in 732 CRISPR screens"/>
</dbReference>
<dbReference type="GeneWiki" id="OR5AT1"/>
<dbReference type="GenomeRNAi" id="284532"/>
<dbReference type="Pharos" id="Q8NHC5">
    <property type="development level" value="Tdark"/>
</dbReference>
<dbReference type="PRO" id="PR:Q8NHC5"/>
<dbReference type="Proteomes" id="UP000005640">
    <property type="component" value="Chromosome 1"/>
</dbReference>
<dbReference type="RNAct" id="Q8NHC5">
    <property type="molecule type" value="protein"/>
</dbReference>
<dbReference type="Bgee" id="ENSG00000196772">
    <property type="expression patterns" value="Expressed in male germ line stem cell (sensu Vertebrata) in testis and 2 other cell types or tissues"/>
</dbReference>
<dbReference type="GO" id="GO:0005886">
    <property type="term" value="C:plasma membrane"/>
    <property type="evidence" value="ECO:0007669"/>
    <property type="project" value="UniProtKB-SubCell"/>
</dbReference>
<dbReference type="GO" id="GO:0004930">
    <property type="term" value="F:G protein-coupled receptor activity"/>
    <property type="evidence" value="ECO:0007669"/>
    <property type="project" value="UniProtKB-KW"/>
</dbReference>
<dbReference type="GO" id="GO:0005549">
    <property type="term" value="F:odorant binding"/>
    <property type="evidence" value="ECO:0000318"/>
    <property type="project" value="GO_Central"/>
</dbReference>
<dbReference type="GO" id="GO:0004984">
    <property type="term" value="F:olfactory receptor activity"/>
    <property type="evidence" value="ECO:0000318"/>
    <property type="project" value="GO_Central"/>
</dbReference>
<dbReference type="CDD" id="cd15227">
    <property type="entry name" value="7tmA_OR14-like"/>
    <property type="match status" value="1"/>
</dbReference>
<dbReference type="FunFam" id="1.20.1070.10:FF:000037">
    <property type="entry name" value="Olfactory receptor"/>
    <property type="match status" value="1"/>
</dbReference>
<dbReference type="Gene3D" id="1.20.1070.10">
    <property type="entry name" value="Rhodopsin 7-helix transmembrane proteins"/>
    <property type="match status" value="1"/>
</dbReference>
<dbReference type="InterPro" id="IPR000276">
    <property type="entry name" value="GPCR_Rhodpsn"/>
</dbReference>
<dbReference type="InterPro" id="IPR017452">
    <property type="entry name" value="GPCR_Rhodpsn_7TM"/>
</dbReference>
<dbReference type="InterPro" id="IPR000725">
    <property type="entry name" value="Olfact_rcpt"/>
</dbReference>
<dbReference type="InterPro" id="IPR050516">
    <property type="entry name" value="Olfactory_GPCR"/>
</dbReference>
<dbReference type="PANTHER" id="PTHR26452">
    <property type="entry name" value="OLFACTORY RECEPTOR"/>
    <property type="match status" value="1"/>
</dbReference>
<dbReference type="Pfam" id="PF13853">
    <property type="entry name" value="7tm_4"/>
    <property type="match status" value="1"/>
</dbReference>
<dbReference type="PRINTS" id="PR00237">
    <property type="entry name" value="GPCRRHODOPSN"/>
</dbReference>
<dbReference type="PRINTS" id="PR00245">
    <property type="entry name" value="OLFACTORYR"/>
</dbReference>
<dbReference type="SUPFAM" id="SSF81321">
    <property type="entry name" value="Family A G protein-coupled receptor-like"/>
    <property type="match status" value="1"/>
</dbReference>
<dbReference type="PROSITE" id="PS00237">
    <property type="entry name" value="G_PROTEIN_RECEP_F1_1"/>
    <property type="match status" value="1"/>
</dbReference>
<dbReference type="PROSITE" id="PS50262">
    <property type="entry name" value="G_PROTEIN_RECEP_F1_2"/>
    <property type="match status" value="1"/>
</dbReference>
<protein>
    <recommendedName>
        <fullName>Olfactory receptor 14A16</fullName>
    </recommendedName>
    <alternativeName>
        <fullName>Olfactory receptor 5AT1</fullName>
    </alternativeName>
    <alternativeName>
        <fullName>Olfactory receptor OR1-45</fullName>
    </alternativeName>
</protein>
<comment type="function">
    <text evidence="3">Odorant receptor.</text>
</comment>
<comment type="subcellular location">
    <subcellularLocation>
        <location>Cell membrane</location>
        <topology>Multi-pass membrane protein</topology>
    </subcellularLocation>
</comment>
<comment type="similarity">
    <text evidence="2">Belongs to the G-protein coupled receptor 1 family.</text>
</comment>
<comment type="sequence caution" evidence="3">
    <conflict type="erroneous initiation">
        <sequence resource="EMBL-CDS" id="DAA04764"/>
    </conflict>
</comment>
<comment type="online information" name="Human Olfactory Receptor Data Exploratorium (HORDE)">
    <link uri="http://genome.weizmann.ac.il/horde/card/index/symbol:OR14A16"/>
</comment>
<reference key="1">
    <citation type="submission" date="2001-07" db="EMBL/GenBank/DDBJ databases">
        <title>Genome-wide discovery and analysis of human seven transmembrane helix receptor genes.</title>
        <authorList>
            <person name="Suwa M."/>
            <person name="Sato T."/>
            <person name="Okouchi I."/>
            <person name="Arita M."/>
            <person name="Futami K."/>
            <person name="Matsumoto S."/>
            <person name="Tsutsumi S."/>
            <person name="Aburatani H."/>
            <person name="Asai K."/>
            <person name="Akiyama Y."/>
        </authorList>
    </citation>
    <scope>NUCLEOTIDE SEQUENCE [GENOMIC DNA]</scope>
</reference>
<reference key="2">
    <citation type="journal article" date="2004" name="Proc. Natl. Acad. Sci. U.S.A.">
        <title>The human olfactory receptor gene family.</title>
        <authorList>
            <person name="Malnic B."/>
            <person name="Godfrey P.A."/>
            <person name="Buck L.B."/>
        </authorList>
    </citation>
    <scope>IDENTIFICATION</scope>
</reference>
<reference key="3">
    <citation type="journal article" date="2004" name="Proc. Natl. Acad. Sci. U.S.A.">
        <authorList>
            <person name="Malnic B."/>
            <person name="Godfrey P.A."/>
            <person name="Buck L.B."/>
        </authorList>
    </citation>
    <scope>ERRATUM OF PUBMED:14983052</scope>
</reference>
<evidence type="ECO:0000255" key="1"/>
<evidence type="ECO:0000255" key="2">
    <source>
        <dbReference type="PROSITE-ProRule" id="PRU00521"/>
    </source>
</evidence>
<evidence type="ECO:0000305" key="3"/>
<feature type="chain" id="PRO_0000150581" description="Olfactory receptor 14A16">
    <location>
        <begin position="1"/>
        <end position="309"/>
    </location>
</feature>
<feature type="topological domain" description="Extracellular" evidence="1">
    <location>
        <begin position="1"/>
        <end position="23"/>
    </location>
</feature>
<feature type="transmembrane region" description="Helical; Name=1" evidence="1">
    <location>
        <begin position="24"/>
        <end position="44"/>
    </location>
</feature>
<feature type="topological domain" description="Cytoplasmic" evidence="1">
    <location>
        <begin position="45"/>
        <end position="52"/>
    </location>
</feature>
<feature type="transmembrane region" description="Helical; Name=2" evidence="1">
    <location>
        <begin position="53"/>
        <end position="73"/>
    </location>
</feature>
<feature type="topological domain" description="Extracellular" evidence="1">
    <location>
        <begin position="74"/>
        <end position="97"/>
    </location>
</feature>
<feature type="transmembrane region" description="Helical; Name=3" evidence="1">
    <location>
        <begin position="98"/>
        <end position="118"/>
    </location>
</feature>
<feature type="topological domain" description="Cytoplasmic" evidence="1">
    <location>
        <begin position="119"/>
        <end position="131"/>
    </location>
</feature>
<feature type="transmembrane region" description="Helical; Name=4" evidence="1">
    <location>
        <begin position="132"/>
        <end position="152"/>
    </location>
</feature>
<feature type="topological domain" description="Extracellular" evidence="1">
    <location>
        <begin position="153"/>
        <end position="194"/>
    </location>
</feature>
<feature type="transmembrane region" description="Helical; Name=5" evidence="1">
    <location>
        <begin position="195"/>
        <end position="215"/>
    </location>
</feature>
<feature type="topological domain" description="Cytoplasmic" evidence="1">
    <location>
        <begin position="216"/>
        <end position="235"/>
    </location>
</feature>
<feature type="transmembrane region" description="Helical; Name=6" evidence="1">
    <location>
        <begin position="236"/>
        <end position="255"/>
    </location>
</feature>
<feature type="topological domain" description="Extracellular" evidence="1">
    <location>
        <begin position="256"/>
        <end position="268"/>
    </location>
</feature>
<feature type="transmembrane region" description="Helical; Name=7" evidence="1">
    <location>
        <begin position="269"/>
        <end position="289"/>
    </location>
</feature>
<feature type="topological domain" description="Cytoplasmic" evidence="1">
    <location>
        <begin position="290"/>
        <end position="309"/>
    </location>
</feature>
<feature type="glycosylation site" description="N-linked (GlcNAc...) asparagine" evidence="1">
    <location>
        <position position="3"/>
    </location>
</feature>
<feature type="glycosylation site" description="N-linked (GlcNAc...) asparagine" evidence="1">
    <location>
        <position position="87"/>
    </location>
</feature>
<feature type="disulfide bond" evidence="2">
    <location>
        <begin position="95"/>
        <end position="187"/>
    </location>
</feature>
<feature type="sequence variant" id="VAR_043796" description="In dbSNP:rs6695283.">
    <original>I</original>
    <variation>T</variation>
    <location>
        <position position="238"/>
    </location>
</feature>
<organism>
    <name type="scientific">Homo sapiens</name>
    <name type="common">Human</name>
    <dbReference type="NCBI Taxonomy" id="9606"/>
    <lineage>
        <taxon>Eukaryota</taxon>
        <taxon>Metazoa</taxon>
        <taxon>Chordata</taxon>
        <taxon>Craniata</taxon>
        <taxon>Vertebrata</taxon>
        <taxon>Euteleostomi</taxon>
        <taxon>Mammalia</taxon>
        <taxon>Eutheria</taxon>
        <taxon>Euarchontoglires</taxon>
        <taxon>Primates</taxon>
        <taxon>Haplorrhini</taxon>
        <taxon>Catarrhini</taxon>
        <taxon>Hominidae</taxon>
        <taxon>Homo</taxon>
    </lineage>
</organism>
<sequence length="309" mass="34307">MANLTIVTEFILMGFSTNKNMCILHSILFLLIYLCALMGNVLIIMITTLDHHLHTPVYFFLKNLSFLDLCLISVTAPKSIANSLIHNNSISFLGCVSQVFLLLSSASAELLLLTVMSFDRYTAICHPLHYDVIMDRSTCVQRATVSWLYGGLIAVMHTAGTFSLSYCGSNMVHQFFCDIPQLLAISCSENLIREIALILINVVLDFCCFIVIIITYVHVFSTVKKIPSTEGQSKAYSICLPHLLVVLFLSTGFIAYLKPASESPSILDAVISVFYTMLPPTFNPIIYSLRNKAIKVALGMLIKGKLTKK</sequence>
<accession>Q8NHC5</accession>
<accession>Q6IF96</accession>
<gene>
    <name type="primary">OR14A16</name>
    <name type="synonym">OR5AT1</name>
</gene>
<keyword id="KW-1003">Cell membrane</keyword>
<keyword id="KW-1015">Disulfide bond</keyword>
<keyword id="KW-0297">G-protein coupled receptor</keyword>
<keyword id="KW-0325">Glycoprotein</keyword>
<keyword id="KW-0472">Membrane</keyword>
<keyword id="KW-0552">Olfaction</keyword>
<keyword id="KW-0675">Receptor</keyword>
<keyword id="KW-1185">Reference proteome</keyword>
<keyword id="KW-0716">Sensory transduction</keyword>
<keyword id="KW-0807">Transducer</keyword>
<keyword id="KW-0812">Transmembrane</keyword>
<keyword id="KW-1133">Transmembrane helix</keyword>
<name>O14AG_HUMAN</name>
<proteinExistence type="inferred from homology"/>